<sequence>MIVYGLYKSPFGPITVAKNEKGFVMLDFCDCAERSSLDNDYFTDFFYKLDLYFEGKKVDLTEPVDFKPFNEFRIRVFKEVMRIKWGEVRTYKQVADAVKTSPRAVGTALSKNNVLLIIPCHRVIGEKSLGGYSRGVELKRKLLELEGIDVAKFIEK</sequence>
<reference key="1">
    <citation type="journal article" date="2001" name="DNA Res.">
        <title>Complete genome sequence of an aerobic thermoacidophilic Crenarchaeon, Sulfolobus tokodaii strain7.</title>
        <authorList>
            <person name="Kawarabayasi Y."/>
            <person name="Hino Y."/>
            <person name="Horikawa H."/>
            <person name="Jin-no K."/>
            <person name="Takahashi M."/>
            <person name="Sekine M."/>
            <person name="Baba S."/>
            <person name="Ankai A."/>
            <person name="Kosugi H."/>
            <person name="Hosoyama A."/>
            <person name="Fukui S."/>
            <person name="Nagai Y."/>
            <person name="Nishijima K."/>
            <person name="Otsuka R."/>
            <person name="Nakazawa H."/>
            <person name="Takamiya M."/>
            <person name="Kato Y."/>
            <person name="Yoshizawa T."/>
            <person name="Tanaka T."/>
            <person name="Kudoh Y."/>
            <person name="Yamazaki J."/>
            <person name="Kushida N."/>
            <person name="Oguchi A."/>
            <person name="Aoki K."/>
            <person name="Masuda S."/>
            <person name="Yanagii M."/>
            <person name="Nishimura M."/>
            <person name="Yamagishi A."/>
            <person name="Oshima T."/>
            <person name="Kikuchi H."/>
        </authorList>
    </citation>
    <scope>NUCLEOTIDE SEQUENCE [LARGE SCALE GENOMIC DNA]</scope>
    <source>
        <strain>DSM 16993 / JCM 10545 / NBRC 100140 / 7</strain>
    </source>
</reference>
<reference key="2">
    <citation type="submission" date="2004-10" db="PDB data bank">
        <title>Crystal structure of O6-methylguanine methyltransferase from Sulfolobus tokodaii.</title>
        <authorList>
            <person name="Kuroda M."/>
            <person name="Tsunoda M."/>
            <person name="Nakamura K.T."/>
        </authorList>
    </citation>
    <scope>X-RAY CRYSTALLOGRAPHY (2.00 ANGSTROMS)</scope>
</reference>
<gene>
    <name evidence="1" type="primary">ogt</name>
    <name type="ordered locus">STK_09670</name>
</gene>
<proteinExistence type="evidence at protein level"/>
<protein>
    <recommendedName>
        <fullName evidence="1">Methylated-DNA--protein-cysteine methyltransferase</fullName>
        <ecNumber evidence="1">2.1.1.63</ecNumber>
    </recommendedName>
    <alternativeName>
        <fullName evidence="1">6-O-methylguanine-DNA methyltransferase</fullName>
        <shortName evidence="1">MGMT</shortName>
    </alternativeName>
    <alternativeName>
        <fullName evidence="1">O-6-methylguanine-DNA-alkyltransferase</fullName>
    </alternativeName>
</protein>
<evidence type="ECO:0000255" key="1">
    <source>
        <dbReference type="HAMAP-Rule" id="MF_00772"/>
    </source>
</evidence>
<evidence type="ECO:0007829" key="2">
    <source>
        <dbReference type="PDB" id="7DQT"/>
    </source>
</evidence>
<comment type="function">
    <text evidence="1">Involved in the cellular defense against the biological effects of O6-methylguanine (O6-MeG) and O4-methylthymine (O4-MeT) in DNA. Repairs the methylated nucleobase in DNA by stoichiometrically transferring the methyl group to a cysteine residue in the enzyme. This is a suicide reaction: the enzyme is irreversibly inactivated.</text>
</comment>
<comment type="catalytic activity">
    <reaction evidence="1">
        <text>a 6-O-methyl-2'-deoxyguanosine in DNA + L-cysteinyl-[protein] = S-methyl-L-cysteinyl-[protein] + a 2'-deoxyguanosine in DNA</text>
        <dbReference type="Rhea" id="RHEA:24000"/>
        <dbReference type="Rhea" id="RHEA-COMP:10131"/>
        <dbReference type="Rhea" id="RHEA-COMP:10132"/>
        <dbReference type="Rhea" id="RHEA-COMP:11367"/>
        <dbReference type="Rhea" id="RHEA-COMP:11368"/>
        <dbReference type="ChEBI" id="CHEBI:29950"/>
        <dbReference type="ChEBI" id="CHEBI:82612"/>
        <dbReference type="ChEBI" id="CHEBI:85445"/>
        <dbReference type="ChEBI" id="CHEBI:85448"/>
        <dbReference type="EC" id="2.1.1.63"/>
    </reaction>
</comment>
<comment type="catalytic activity">
    <reaction evidence="1">
        <text>a 4-O-methyl-thymidine in DNA + L-cysteinyl-[protein] = a thymidine in DNA + S-methyl-L-cysteinyl-[protein]</text>
        <dbReference type="Rhea" id="RHEA:53428"/>
        <dbReference type="Rhea" id="RHEA-COMP:10131"/>
        <dbReference type="Rhea" id="RHEA-COMP:10132"/>
        <dbReference type="Rhea" id="RHEA-COMP:13555"/>
        <dbReference type="Rhea" id="RHEA-COMP:13556"/>
        <dbReference type="ChEBI" id="CHEBI:29950"/>
        <dbReference type="ChEBI" id="CHEBI:82612"/>
        <dbReference type="ChEBI" id="CHEBI:137386"/>
        <dbReference type="ChEBI" id="CHEBI:137387"/>
        <dbReference type="EC" id="2.1.1.63"/>
    </reaction>
</comment>
<comment type="subcellular location">
    <subcellularLocation>
        <location evidence="1">Cytoplasm</location>
    </subcellularLocation>
</comment>
<comment type="miscellaneous">
    <text>This enzyme catalyzes only one turnover and therefore is not strictly catalytic. According to one definition, an enzyme is a biocatalyst that acts repeatedly and over many reaction cycles.</text>
</comment>
<comment type="similarity">
    <text evidence="1">Belongs to the MGMT family.</text>
</comment>
<name>OGT_SULTO</name>
<keyword id="KW-0002">3D-structure</keyword>
<keyword id="KW-0963">Cytoplasm</keyword>
<keyword id="KW-0227">DNA damage</keyword>
<keyword id="KW-0234">DNA repair</keyword>
<keyword id="KW-0489">Methyltransferase</keyword>
<keyword id="KW-1185">Reference proteome</keyword>
<keyword id="KW-0808">Transferase</keyword>
<dbReference type="EC" id="2.1.1.63" evidence="1"/>
<dbReference type="EMBL" id="BA000023">
    <property type="protein sequence ID" value="BAK54430.1"/>
    <property type="molecule type" value="Genomic_DNA"/>
</dbReference>
<dbReference type="RefSeq" id="WP_010978968.1">
    <property type="nucleotide sequence ID" value="NC_003106.2"/>
</dbReference>
<dbReference type="PDB" id="1WRJ">
    <property type="method" value="X-ray"/>
    <property type="resolution" value="2.00 A"/>
    <property type="chains" value="A=1-156"/>
</dbReference>
<dbReference type="PDB" id="7CSM">
    <property type="method" value="X-ray"/>
    <property type="resolution" value="1.25 A"/>
    <property type="chains" value="A=1-156"/>
</dbReference>
<dbReference type="PDB" id="7D4V">
    <property type="method" value="X-ray"/>
    <property type="resolution" value="1.78 A"/>
    <property type="chains" value="A=1-156"/>
</dbReference>
<dbReference type="PDB" id="7DKN">
    <property type="method" value="X-ray"/>
    <property type="resolution" value="1.79 A"/>
    <property type="chains" value="A=1-156"/>
</dbReference>
<dbReference type="PDB" id="7DQQ">
    <property type="method" value="X-ray"/>
    <property type="resolution" value="2.60 A"/>
    <property type="chains" value="A=1-156"/>
</dbReference>
<dbReference type="PDB" id="7DQR">
    <property type="method" value="X-ray"/>
    <property type="resolution" value="1.74 A"/>
    <property type="chains" value="A=1-156"/>
</dbReference>
<dbReference type="PDB" id="7DQT">
    <property type="method" value="X-ray"/>
    <property type="resolution" value="1.13 A"/>
    <property type="chains" value="A=1-156"/>
</dbReference>
<dbReference type="PDB" id="7E1P">
    <property type="method" value="X-ray"/>
    <property type="resolution" value="1.63 A"/>
    <property type="chains" value="A=1-156"/>
</dbReference>
<dbReference type="PDBsum" id="1WRJ"/>
<dbReference type="PDBsum" id="7CSM"/>
<dbReference type="PDBsum" id="7D4V"/>
<dbReference type="PDBsum" id="7DKN"/>
<dbReference type="PDBsum" id="7DQQ"/>
<dbReference type="PDBsum" id="7DQR"/>
<dbReference type="PDBsum" id="7DQT"/>
<dbReference type="PDBsum" id="7E1P"/>
<dbReference type="SMR" id="Q973C7"/>
<dbReference type="STRING" id="273063.STK_09670"/>
<dbReference type="GeneID" id="1458939"/>
<dbReference type="KEGG" id="sto:STK_09670"/>
<dbReference type="PATRIC" id="fig|273063.9.peg.1082"/>
<dbReference type="eggNOG" id="arCOG02724">
    <property type="taxonomic scope" value="Archaea"/>
</dbReference>
<dbReference type="OrthoDB" id="372118at2157"/>
<dbReference type="EvolutionaryTrace" id="Q973C7"/>
<dbReference type="Proteomes" id="UP000001015">
    <property type="component" value="Chromosome"/>
</dbReference>
<dbReference type="GO" id="GO:0005737">
    <property type="term" value="C:cytoplasm"/>
    <property type="evidence" value="ECO:0007669"/>
    <property type="project" value="UniProtKB-SubCell"/>
</dbReference>
<dbReference type="GO" id="GO:0003908">
    <property type="term" value="F:methylated-DNA-[protein]-cysteine S-methyltransferase activity"/>
    <property type="evidence" value="ECO:0007669"/>
    <property type="project" value="UniProtKB-UniRule"/>
</dbReference>
<dbReference type="GO" id="GO:0006307">
    <property type="term" value="P:DNA alkylation repair"/>
    <property type="evidence" value="ECO:0007669"/>
    <property type="project" value="UniProtKB-UniRule"/>
</dbReference>
<dbReference type="GO" id="GO:0032259">
    <property type="term" value="P:methylation"/>
    <property type="evidence" value="ECO:0007669"/>
    <property type="project" value="UniProtKB-KW"/>
</dbReference>
<dbReference type="CDD" id="cd06445">
    <property type="entry name" value="ATase"/>
    <property type="match status" value="1"/>
</dbReference>
<dbReference type="Gene3D" id="3.30.160.70">
    <property type="entry name" value="Methylated DNA-protein cysteine methyltransferase domain"/>
    <property type="match status" value="1"/>
</dbReference>
<dbReference type="Gene3D" id="1.10.10.10">
    <property type="entry name" value="Winged helix-like DNA-binding domain superfamily/Winged helix DNA-binding domain"/>
    <property type="match status" value="1"/>
</dbReference>
<dbReference type="HAMAP" id="MF_00772">
    <property type="entry name" value="OGT"/>
    <property type="match status" value="1"/>
</dbReference>
<dbReference type="InterPro" id="IPR001497">
    <property type="entry name" value="MethylDNA_cys_MeTrfase_AS"/>
</dbReference>
<dbReference type="InterPro" id="IPR014048">
    <property type="entry name" value="MethylDNA_cys_MeTrfase_DNA-bd"/>
</dbReference>
<dbReference type="InterPro" id="IPR036217">
    <property type="entry name" value="MethylDNA_cys_MeTrfase_DNAb"/>
</dbReference>
<dbReference type="InterPro" id="IPR008332">
    <property type="entry name" value="MethylG_MeTrfase_N"/>
</dbReference>
<dbReference type="InterPro" id="IPR023546">
    <property type="entry name" value="MGMT"/>
</dbReference>
<dbReference type="InterPro" id="IPR036631">
    <property type="entry name" value="MGMT_N_sf"/>
</dbReference>
<dbReference type="InterPro" id="IPR036388">
    <property type="entry name" value="WH-like_DNA-bd_sf"/>
</dbReference>
<dbReference type="NCBIfam" id="TIGR00589">
    <property type="entry name" value="ogt"/>
    <property type="match status" value="1"/>
</dbReference>
<dbReference type="PANTHER" id="PTHR10815">
    <property type="entry name" value="METHYLATED-DNA--PROTEIN-CYSTEINE METHYLTRANSFERASE"/>
    <property type="match status" value="1"/>
</dbReference>
<dbReference type="PANTHER" id="PTHR10815:SF13">
    <property type="entry name" value="METHYLATED-DNA--PROTEIN-CYSTEINE METHYLTRANSFERASE"/>
    <property type="match status" value="1"/>
</dbReference>
<dbReference type="Pfam" id="PF01035">
    <property type="entry name" value="DNA_binding_1"/>
    <property type="match status" value="1"/>
</dbReference>
<dbReference type="Pfam" id="PF02870">
    <property type="entry name" value="Methyltransf_1N"/>
    <property type="match status" value="1"/>
</dbReference>
<dbReference type="SUPFAM" id="SSF53155">
    <property type="entry name" value="Methylated DNA-protein cysteine methyltransferase domain"/>
    <property type="match status" value="1"/>
</dbReference>
<dbReference type="SUPFAM" id="SSF46767">
    <property type="entry name" value="Methylated DNA-protein cysteine methyltransferase, C-terminal domain"/>
    <property type="match status" value="1"/>
</dbReference>
<dbReference type="PROSITE" id="PS00374">
    <property type="entry name" value="MGMT"/>
    <property type="match status" value="1"/>
</dbReference>
<organism>
    <name type="scientific">Sulfurisphaera tokodaii (strain DSM 16993 / JCM 10545 / NBRC 100140 / 7)</name>
    <name type="common">Sulfolobus tokodaii</name>
    <dbReference type="NCBI Taxonomy" id="273063"/>
    <lineage>
        <taxon>Archaea</taxon>
        <taxon>Thermoproteota</taxon>
        <taxon>Thermoprotei</taxon>
        <taxon>Sulfolobales</taxon>
        <taxon>Sulfolobaceae</taxon>
        <taxon>Sulfurisphaera</taxon>
    </lineage>
</organism>
<accession>Q973C7</accession>
<accession>F9VNS2</accession>
<feature type="chain" id="PRO_0000139388" description="Methylated-DNA--protein-cysteine methyltransferase">
    <location>
        <begin position="1"/>
        <end position="156"/>
    </location>
</feature>
<feature type="active site" description="Nucleophile; methyl group acceptor" evidence="1">
    <location>
        <position position="120"/>
    </location>
</feature>
<feature type="strand" evidence="2">
    <location>
        <begin position="3"/>
        <end position="9"/>
    </location>
</feature>
<feature type="strand" evidence="2">
    <location>
        <begin position="12"/>
        <end position="18"/>
    </location>
</feature>
<feature type="strand" evidence="2">
    <location>
        <begin position="20"/>
        <end position="29"/>
    </location>
</feature>
<feature type="helix" evidence="2">
    <location>
        <begin position="34"/>
        <end position="36"/>
    </location>
</feature>
<feature type="helix" evidence="2">
    <location>
        <begin position="39"/>
        <end position="42"/>
    </location>
</feature>
<feature type="helix" evidence="2">
    <location>
        <begin position="43"/>
        <end position="53"/>
    </location>
</feature>
<feature type="helix" evidence="2">
    <location>
        <begin position="71"/>
        <end position="81"/>
    </location>
</feature>
<feature type="helix" evidence="2">
    <location>
        <begin position="91"/>
        <end position="98"/>
    </location>
</feature>
<feature type="helix" evidence="2">
    <location>
        <begin position="102"/>
        <end position="110"/>
    </location>
</feature>
<feature type="turn" evidence="2">
    <location>
        <begin position="115"/>
        <end position="117"/>
    </location>
</feature>
<feature type="helix" evidence="2">
    <location>
        <begin position="120"/>
        <end position="122"/>
    </location>
</feature>
<feature type="strand" evidence="2">
    <location>
        <begin position="126"/>
        <end position="128"/>
    </location>
</feature>
<feature type="helix" evidence="2">
    <location>
        <begin position="136"/>
        <end position="145"/>
    </location>
</feature>
<feature type="helix" evidence="2">
    <location>
        <begin position="150"/>
        <end position="154"/>
    </location>
</feature>